<accession>A0A0S2CGD3</accession>
<gene>
    <name evidence="12" type="primary">pigC</name>
</gene>
<proteinExistence type="evidence at protein level"/>
<name>PIGC_MONRU</name>
<keyword id="KW-0521">NADP</keyword>
<keyword id="KW-0560">Oxidoreductase</keyword>
<keyword id="KW-0608">Pigment</keyword>
<comment type="function">
    <text evidence="8 9 10">Short chain dehydrogenase; part of the gene cluster that mediates the biosynthesis of azaphilone pigments (MonAzPs), a complex mixture of compounds with a common azaphilone skeleton very widely used as food colorants (PubMed:26946170, PubMed:28959415, PubMed:34220766). Within the pathway, pigC intercepts the very reactive benzaldehyde produced by the nrPKS pigA to reduce the omega-1 carbonyl to the alcohol to provide the first stable enzyme-free MonAzPs intermediate, 6-(4-hydroxy-2-oxopentyl)-3-methyl-2,4-dioxocyclohexane carbaldehyde, also known as M7PKS-1 (PubMed:26946170, PubMed:28959415). The first step of the pathway is performed by the nrPKS pigA that forms the hexaketide precursor from successive condensations of five malonyl-CoA units, with a simple acetyl-CoA starter unit. The role of esterase pigG is not clear, but it may play at most a supplementary role in the formation of the benzaldehyde produced by the pigA nrPKS. This very reactive benzaldehyde is intercepted by the pigC ketoreductase that to provide the first stable enzyme-free MonAzPs intermediate, M7PKS-1. The FAD-dependent monooxygenase pigN hydroxylates M7PKS-1 at C-4, which triggers the formation of the pyran ring. PigJ, pigK and pigD are involved in the acetylation of the pyran ring. PigJ and pigK form the two subunits of a dedicated fungal FAS that produces the side chain fatty acyl moiety of MonAzPs and pigD transfers the fatty acyl chain to the C-4 alcohol. PigM and pigO are involved in the elimination of the omega-1 alcohol. PigM acts as an O-acetyltransferase that synthesizes the putative O-11 acetyl intermediate whereas pigO eliminates acetic acid to yield an intermediate with a C10(11) double bond. The dehydration of the C-11 alcohol followed by the reduction of the C6(7) double bond by the NAD(P)H-dependent oxidoreductase pigE increases the electrophilicity of the C-5 ketone of the resulting acyl benzopyran. This in turn sets up the C-5 ketone for an intramolecular Knoevenagel aldol condensation with the C-20 enol of the side chain. This condensation affords the characteristic linear tricyclic carbon skeletons of the yellow pigments that serve as the common precursors for the classical yellow pigments monascin and ankaflavin, orange pigments rubopunctatin and monascorubrin, and red pigments ribropunctamine and monascorubramine. The FAD-dependent oxidoreductase pigF is especially invoved in the biosynthesis of orange and red pigments via desaturation of C6(7) (PubMed:28959415).</text>
</comment>
<comment type="pathway">
    <text evidence="8 9">Secondary metabolite biosynthesis.</text>
</comment>
<comment type="induction">
    <text evidence="10">Expression seems not to be regulated by the azaphilone pigments (MonAzPs) gene cluster-specific transcription regulator pigB.</text>
</comment>
<comment type="disruption phenotype">
    <text evidence="9">Impairs classical pigments production since the very reactive benzaldehyde produced by the nrPKS pigA undergoes spontaneous aldol cyclization in the C-1 to C-10 register to yield a trihydroxynaphthalene shunt metabolite and its spontaneously oxidized quinone.</text>
</comment>
<comment type="biotechnology">
    <text evidence="3 4 5 6 7 11">As colorants, MonAzPs are widely used in various food products for centuries (PubMed:37087240). Moreover, MonAzPs also possess wide-ranging biological activities such as antibacterial activity, preventing hypertension, lowering cholesterol levels, causing hypolipidemic effects, and displaying antiobesity and antitumor activities (PubMed:16283302, PubMed:16660141, PubMed:17191930, PubMed:20666456, PubMed:22562164).</text>
</comment>
<comment type="similarity">
    <text evidence="13">Belongs to the short-chain dehydrogenases/reductases (SDR) family.</text>
</comment>
<reference key="1">
    <citation type="submission" date="2015-09" db="EMBL/GenBank/DDBJ databases">
        <authorList>
            <person name="Jackson K.R."/>
            <person name="Lunt B.L."/>
            <person name="Fisher J.N.B."/>
            <person name="Gardner A.V."/>
            <person name="Bailey M.E."/>
            <person name="Deus L.M."/>
            <person name="Earl A.S."/>
            <person name="Gibby P.D."/>
            <person name="Hartmann K.A."/>
            <person name="Liu J.E."/>
            <person name="Manci A.M."/>
            <person name="Nielsen D.A."/>
            <person name="Solomon M.B."/>
            <person name="Breakwell D.P."/>
            <person name="Burnett S.H."/>
            <person name="Grose J.H."/>
        </authorList>
    </citation>
    <scope>NUCLEOTIDE SEQUENCE [MRNA]</scope>
    <source>
        <strain>M7</strain>
    </source>
</reference>
<reference key="2">
    <citation type="journal article" date="1977" name="Plant Physiol.">
        <title>Pigmentation and antibacterial activity of fast neutron- and X-ray-induced strains of Monascus purpureus went.</title>
        <authorList>
            <person name="Wong H.C."/>
            <person name="Bau Y.S."/>
        </authorList>
    </citation>
    <scope>BIOTECHNOLOGY</scope>
</reference>
<reference key="3">
    <citation type="journal article" date="2005" name="Chem. Biodivers.">
        <title>Anti-tumor-initiating effects of monascin, an azaphilonoid pigment from the extract of Monascus pilosus fermented rice (red-mold rice).</title>
        <authorList>
            <person name="Akihisa T."/>
            <person name="Tokuda H."/>
            <person name="Ukiya M."/>
            <person name="Kiyota A."/>
            <person name="Yasukawa K."/>
            <person name="Sakamoto N."/>
            <person name="Kimura Y."/>
            <person name="Suzuki T."/>
            <person name="Takayasu J."/>
            <person name="Nishino H."/>
        </authorList>
    </citation>
    <scope>BIOTECHNOLOGY</scope>
</reference>
<reference key="4">
    <citation type="journal article" date="2006" name="Appl. Microbiol. Biotechnol.">
        <title>In vivo hypolipidemic effects and safety of low dosage Monascus powder in a hamster model of hyperlipidemia.</title>
        <authorList>
            <person name="Lee C.L."/>
            <person name="Tsai T.Y."/>
            <person name="Wang J.J."/>
            <person name="Pan T.M."/>
        </authorList>
    </citation>
    <scope>BIOTECHNOLOGY</scope>
</reference>
<reference key="5">
    <citation type="journal article" date="2010" name="J. Agric. Food Chem.">
        <title>Monascin and ankaflavin act as novel hypolipidemic and high-density lipoprotein cholesterol-raising agents in red mold dioscorea.</title>
        <authorList>
            <person name="Lee C.L."/>
            <person name="Kung Y.H."/>
            <person name="Wu C.L."/>
            <person name="Hsu Y.W."/>
            <person name="Pan T.M."/>
        </authorList>
    </citation>
    <scope>BIOTECHNOLOGY</scope>
</reference>
<reference key="6">
    <citation type="journal article" date="2012" name="Appl. Microbiol. Biotechnol.">
        <title>Development of Monascus fermentation technology for high hypolipidemic effect.</title>
        <authorList>
            <person name="Lee C.L."/>
            <person name="Pan T.M."/>
        </authorList>
    </citation>
    <scope>BIOTECHNOLOGY</scope>
</reference>
<reference key="7">
    <citation type="journal article" date="2016" name="Appl. Microbiol. Biotechnol.">
        <title>Identification and role analysis of an intermediate produced by a polygenic mutant of Monascus pigments cluster in Monascus ruber M7.</title>
        <authorList>
            <person name="Liu J."/>
            <person name="Zhou Y."/>
            <person name="Yi T."/>
            <person name="Zhao M."/>
            <person name="Xie N."/>
            <person name="Lei M."/>
            <person name="Liu Q."/>
            <person name="Shao Y."/>
            <person name="Chen F."/>
        </authorList>
    </citation>
    <scope>FUNCTION</scope>
    <scope>PATHWAY</scope>
</reference>
<reference key="8">
    <citation type="journal article" date="2017" name="Chem. Sci.">
        <title>Orange, red, yellow: biosynthesis of azaphilone pigments in Monascus fungi.</title>
        <authorList>
            <person name="Chen W."/>
            <person name="Chen R."/>
            <person name="Liu Q."/>
            <person name="He Y."/>
            <person name="He K."/>
            <person name="Ding X."/>
            <person name="Kang L."/>
            <person name="Guo X."/>
            <person name="Xie N."/>
            <person name="Zhou Y."/>
            <person name="Lu Y."/>
            <person name="Cox R.J."/>
            <person name="Molnar I."/>
            <person name="Li M."/>
            <person name="Shao Y."/>
            <person name="Chen F."/>
        </authorList>
    </citation>
    <scope>FUNCTION</scope>
    <scope>DISRUPTION PHENOTYPE</scope>
    <scope>CATALYTIC ACTIVITY</scope>
    <scope>PATHWAY</scope>
</reference>
<reference key="9">
    <citation type="journal article" date="2021" name="Front. Microbiol.">
        <title>An integrated approach to determine the boundaries of the azaphilone pigment biosynthetic gene cluster of Monascus ruber M7 gown on potato dextrose agar.</title>
        <authorList>
            <person name="Liu Q."/>
            <person name="Zhong S."/>
            <person name="Wang X."/>
            <person name="Gao S."/>
            <person name="Yang X."/>
            <person name="Chen F."/>
            <person name="Molnar I."/>
        </authorList>
    </citation>
    <scope>FUNCTION</scope>
    <scope>INDUCTION</scope>
</reference>
<reference key="10">
    <citation type="journal article" date="2023" name="Food Res. Intern.">
        <title>Improved natural food colorant production in the filamentous fungus Monascus ruber using CRISPR-based engineering.</title>
        <authorList>
            <person name="Ree Yoon H."/>
            <person name="Han S."/>
            <person name="Chul Shin S."/>
            <person name="Cheong Yeom S."/>
            <person name="Jin Kim H."/>
        </authorList>
    </citation>
    <scope>BIOTECHNOLOGY</scope>
</reference>
<evidence type="ECO:0000250" key="1">
    <source>
        <dbReference type="UniProtKB" id="L0E2Z4"/>
    </source>
</evidence>
<evidence type="ECO:0000250" key="2">
    <source>
        <dbReference type="UniProtKB" id="O93868"/>
    </source>
</evidence>
<evidence type="ECO:0000269" key="3">
    <source>
    </source>
</evidence>
<evidence type="ECO:0000269" key="4">
    <source>
    </source>
</evidence>
<evidence type="ECO:0000269" key="5">
    <source>
    </source>
</evidence>
<evidence type="ECO:0000269" key="6">
    <source>
    </source>
</evidence>
<evidence type="ECO:0000269" key="7">
    <source>
    </source>
</evidence>
<evidence type="ECO:0000269" key="8">
    <source>
    </source>
</evidence>
<evidence type="ECO:0000269" key="9">
    <source>
    </source>
</evidence>
<evidence type="ECO:0000269" key="10">
    <source>
    </source>
</evidence>
<evidence type="ECO:0000269" key="11">
    <source>
    </source>
</evidence>
<evidence type="ECO:0000303" key="12">
    <source>
    </source>
</evidence>
<evidence type="ECO:0000305" key="13"/>
<feature type="chain" id="PRO_0000460212" description="Short chain dehydrogenase pigC">
    <location>
        <begin position="1"/>
        <end position="303"/>
    </location>
</feature>
<feature type="active site" description="Proton donor" evidence="2">
    <location>
        <position position="196"/>
    </location>
</feature>
<feature type="active site" description="Lowers pKa of active site Tyr" evidence="2">
    <location>
        <position position="200"/>
    </location>
</feature>
<feature type="binding site" evidence="1">
    <location>
        <position position="45"/>
    </location>
    <ligand>
        <name>NADP(+)</name>
        <dbReference type="ChEBI" id="CHEBI:58349"/>
    </ligand>
</feature>
<feature type="binding site" evidence="1">
    <location>
        <position position="103"/>
    </location>
    <ligand>
        <name>NADP(+)</name>
        <dbReference type="ChEBI" id="CHEBI:58349"/>
    </ligand>
</feature>
<feature type="binding site" evidence="2">
    <location>
        <position position="130"/>
    </location>
    <ligand>
        <name>NADP(+)</name>
        <dbReference type="ChEBI" id="CHEBI:58349"/>
    </ligand>
</feature>
<feature type="binding site" evidence="1">
    <location>
        <position position="164"/>
    </location>
    <ligand>
        <name>NADP(+)</name>
        <dbReference type="ChEBI" id="CHEBI:58349"/>
    </ligand>
</feature>
<feature type="binding site" evidence="2">
    <location>
        <position position="196"/>
    </location>
    <ligand>
        <name>NADP(+)</name>
        <dbReference type="ChEBI" id="CHEBI:58349"/>
    </ligand>
</feature>
<feature type="binding site" evidence="2">
    <location>
        <position position="200"/>
    </location>
    <ligand>
        <name>NADP(+)</name>
        <dbReference type="ChEBI" id="CHEBI:58349"/>
    </ligand>
</feature>
<feature type="binding site" evidence="1">
    <location>
        <position position="231"/>
    </location>
    <ligand>
        <name>NADP(+)</name>
        <dbReference type="ChEBI" id="CHEBI:58349"/>
    </ligand>
</feature>
<organism>
    <name type="scientific">Monascus ruber</name>
    <name type="common">Mold</name>
    <dbReference type="NCBI Taxonomy" id="89489"/>
    <lineage>
        <taxon>Eukaryota</taxon>
        <taxon>Fungi</taxon>
        <taxon>Dikarya</taxon>
        <taxon>Ascomycota</taxon>
        <taxon>Pezizomycotina</taxon>
        <taxon>Eurotiomycetes</taxon>
        <taxon>Eurotiomycetidae</taxon>
        <taxon>Eurotiales</taxon>
        <taxon>Aspergillaceae</taxon>
        <taxon>Monascus</taxon>
    </lineage>
</organism>
<protein>
    <recommendedName>
        <fullName evidence="12">Short chain dehydrogenase pigC</fullName>
        <ecNumber evidence="9">1.1.1.-</ecNumber>
    </recommendedName>
    <alternativeName>
        <fullName evidence="12">Azaphilone pigments biosynthesis cluster protein C</fullName>
    </alternativeName>
</protein>
<dbReference type="EC" id="1.1.1.-" evidence="9"/>
<dbReference type="EMBL" id="KT862836">
    <property type="protein sequence ID" value="ALN44201.1"/>
    <property type="molecule type" value="mRNA"/>
</dbReference>
<dbReference type="SMR" id="A0A0S2CGD3"/>
<dbReference type="GO" id="GO:0016616">
    <property type="term" value="F:oxidoreductase activity, acting on the CH-OH group of donors, NAD or NADP as acceptor"/>
    <property type="evidence" value="ECO:0007669"/>
    <property type="project" value="TreeGrafter"/>
</dbReference>
<dbReference type="GO" id="GO:0031409">
    <property type="term" value="F:pigment binding"/>
    <property type="evidence" value="ECO:0007669"/>
    <property type="project" value="UniProtKB-KW"/>
</dbReference>
<dbReference type="CDD" id="cd05233">
    <property type="entry name" value="SDR_c"/>
    <property type="match status" value="1"/>
</dbReference>
<dbReference type="Gene3D" id="3.40.50.720">
    <property type="entry name" value="NAD(P)-binding Rossmann-like Domain"/>
    <property type="match status" value="1"/>
</dbReference>
<dbReference type="InterPro" id="IPR036291">
    <property type="entry name" value="NAD(P)-bd_dom_sf"/>
</dbReference>
<dbReference type="InterPro" id="IPR002347">
    <property type="entry name" value="SDR_fam"/>
</dbReference>
<dbReference type="PANTHER" id="PTHR42760:SF37">
    <property type="entry name" value="CLAVALDEHYDE DEHYDROGENASE"/>
    <property type="match status" value="1"/>
</dbReference>
<dbReference type="PANTHER" id="PTHR42760">
    <property type="entry name" value="SHORT-CHAIN DEHYDROGENASES/REDUCTASES FAMILY MEMBER"/>
    <property type="match status" value="1"/>
</dbReference>
<dbReference type="Pfam" id="PF00106">
    <property type="entry name" value="adh_short"/>
    <property type="match status" value="1"/>
</dbReference>
<dbReference type="PRINTS" id="PR00081">
    <property type="entry name" value="GDHRDH"/>
</dbReference>
<dbReference type="PRINTS" id="PR00080">
    <property type="entry name" value="SDRFAMILY"/>
</dbReference>
<dbReference type="SUPFAM" id="SSF51735">
    <property type="entry name" value="NAD(P)-binding Rossmann-fold domains"/>
    <property type="match status" value="1"/>
</dbReference>
<sequence length="303" mass="32563">MPPPRGTPNILEGPGDYDVTSTIHNDTYPAIDPLKADLSGKAVFITGGSKGLGRAMVLSFAKAGASYIAAGARSDMTELAKDVAAAAATAKRSPPKFLPIQLDVTDPQSVENAAVAVKSEFGRCDVVVNNAGVLGRFGGILQTDPQEWWQVLGVNLRGPYLVSRAFLPLLLESELKALVHVTSVAAHLLNPTLSAYQTSKMALLKFSQLVHAEFGSKGLVTFAVHPGNCPTDIMGGPDGLSEHEKLIFVETPEISADTIVYLTSEKRDWLGGRYINVTWDMPELIAMKDEIVQGDKLKVKFIY</sequence>